<proteinExistence type="evidence at transcript level"/>
<name>FOXC1_XENTR</name>
<sequence length="495" mass="53900">MQARYSVSSPNSLGVVPYLSGEQSYYRAAAAAAAAGGGYTGMAAPMSMYSHPAHEQYQAGMARAYGPYTPQPQPKDMVKPPYSYIALITMAIQNAPEKKITLNGIYQFIMERFPFYRDNKQGWQNSIRHNLSLNECFVKVPRDDKKPGKGSYWTLDPDSYNMFENGSFLRRRRRFKKKDVVKDATKEDKDRLLKEHHGSQPAAAQQQRQQQQGQAQAEQDSGSQPVRIQDIKTENGTSSPPQAMSPALSTVPKIESPDSSSSMSSGSPHSIPSNRSMSLEAAESHHPHQQHHHSQGFSVDNIMTSLRGSPQGSGELPSPLISSSRTGIAPSSLLTYSPGQGSIYSPPCSQGTSSGGGAGTYHCNMQAMSLYSGDRSGHLTPANTPAATTVEDTLPDYSITTTTTSALSHGNQEHPHQGRLPSWYLNQAGDLGHLAGATYPGQQQNFHSVREMFESQRLGLNSSPVNGNSSCQMSFPPSQSLYRTSGAFVYDCSKF</sequence>
<protein>
    <recommendedName>
        <fullName evidence="7">Forkhead box protein C1</fullName>
    </recommendedName>
</protein>
<reference evidence="7" key="1">
    <citation type="submission" date="2004-08" db="EMBL/GenBank/DDBJ databases">
        <authorList>
            <consortium name="NIH - Xenopus Gene Collection (XGC) project"/>
        </authorList>
    </citation>
    <scope>NUCLEOTIDE SEQUENCE [LARGE SCALE MRNA]</scope>
    <source>
        <tissue evidence="7">Gastrula</tissue>
    </source>
</reference>
<evidence type="ECO:0000250" key="1">
    <source>
        <dbReference type="UniProtKB" id="Q12948"/>
    </source>
</evidence>
<evidence type="ECO:0000250" key="2">
    <source>
        <dbReference type="UniProtKB" id="Q61572"/>
    </source>
</evidence>
<evidence type="ECO:0000250" key="3">
    <source>
        <dbReference type="UniProtKB" id="Q9PVZ3"/>
    </source>
</evidence>
<evidence type="ECO:0000255" key="4">
    <source>
        <dbReference type="PROSITE-ProRule" id="PRU00089"/>
    </source>
</evidence>
<evidence type="ECO:0000256" key="5">
    <source>
        <dbReference type="SAM" id="MobiDB-lite"/>
    </source>
</evidence>
<evidence type="ECO:0000305" key="6"/>
<evidence type="ECO:0000312" key="7">
    <source>
        <dbReference type="EMBL" id="AAH79966.1"/>
    </source>
</evidence>
<feature type="chain" id="PRO_0000390739" description="Forkhead box protein C1">
    <location>
        <begin position="1"/>
        <end position="495"/>
    </location>
</feature>
<feature type="DNA-binding region" description="Fork-head" evidence="4">
    <location>
        <begin position="79"/>
        <end position="173"/>
    </location>
</feature>
<feature type="region of interest" description="Disordered" evidence="5">
    <location>
        <begin position="175"/>
        <end position="322"/>
    </location>
</feature>
<feature type="compositionally biased region" description="Basic and acidic residues" evidence="5">
    <location>
        <begin position="178"/>
        <end position="198"/>
    </location>
</feature>
<feature type="compositionally biased region" description="Low complexity" evidence="5">
    <location>
        <begin position="199"/>
        <end position="224"/>
    </location>
</feature>
<feature type="compositionally biased region" description="Low complexity" evidence="5">
    <location>
        <begin position="257"/>
        <end position="276"/>
    </location>
</feature>
<feature type="compositionally biased region" description="Polar residues" evidence="5">
    <location>
        <begin position="296"/>
        <end position="312"/>
    </location>
</feature>
<dbReference type="EMBL" id="BC079966">
    <property type="protein sequence ID" value="AAH79966.1"/>
    <property type="molecule type" value="mRNA"/>
</dbReference>
<dbReference type="RefSeq" id="NP_001007864.1">
    <property type="nucleotide sequence ID" value="NM_001007863.1"/>
</dbReference>
<dbReference type="SMR" id="Q68F77"/>
<dbReference type="FunCoup" id="Q68F77">
    <property type="interactions" value="1184"/>
</dbReference>
<dbReference type="STRING" id="8364.ENSXETP00000033276"/>
<dbReference type="PaxDb" id="8364-ENSXETP00000001313"/>
<dbReference type="DNASU" id="493250"/>
<dbReference type="GeneID" id="493250"/>
<dbReference type="KEGG" id="xtr:493250"/>
<dbReference type="AGR" id="Xenbase:XB-GENE-479055"/>
<dbReference type="CTD" id="2296"/>
<dbReference type="Xenbase" id="XB-GENE-479055">
    <property type="gene designation" value="foxc1"/>
</dbReference>
<dbReference type="eggNOG" id="KOG2294">
    <property type="taxonomic scope" value="Eukaryota"/>
</dbReference>
<dbReference type="HOGENOM" id="CLU_035722_3_1_1"/>
<dbReference type="InParanoid" id="Q68F77"/>
<dbReference type="OMA" id="TSWYLNQ"/>
<dbReference type="OrthoDB" id="5954824at2759"/>
<dbReference type="PhylomeDB" id="Q68F77"/>
<dbReference type="TreeFam" id="TF316127"/>
<dbReference type="Proteomes" id="UP000008143">
    <property type="component" value="Chromosome 6"/>
</dbReference>
<dbReference type="Bgee" id="ENSXETG00000000594">
    <property type="expression patterns" value="Expressed in gastrula and 25 other cell types or tissues"/>
</dbReference>
<dbReference type="GO" id="GO:0005634">
    <property type="term" value="C:nucleus"/>
    <property type="evidence" value="ECO:0000250"/>
    <property type="project" value="UniProtKB"/>
</dbReference>
<dbReference type="GO" id="GO:0003682">
    <property type="term" value="F:chromatin binding"/>
    <property type="evidence" value="ECO:0007669"/>
    <property type="project" value="Ensembl"/>
</dbReference>
<dbReference type="GO" id="GO:0003677">
    <property type="term" value="F:DNA binding"/>
    <property type="evidence" value="ECO:0000250"/>
    <property type="project" value="UniProtKB"/>
</dbReference>
<dbReference type="GO" id="GO:0003700">
    <property type="term" value="F:DNA-binding transcription factor activity"/>
    <property type="evidence" value="ECO:0000250"/>
    <property type="project" value="UniProtKB"/>
</dbReference>
<dbReference type="GO" id="GO:0000976">
    <property type="term" value="F:transcription cis-regulatory region binding"/>
    <property type="evidence" value="ECO:0000250"/>
    <property type="project" value="UniProtKB"/>
</dbReference>
<dbReference type="GO" id="GO:0030325">
    <property type="term" value="P:adrenal gland development"/>
    <property type="evidence" value="ECO:0007669"/>
    <property type="project" value="Ensembl"/>
</dbReference>
<dbReference type="GO" id="GO:0001568">
    <property type="term" value="P:blood vessel development"/>
    <property type="evidence" value="ECO:0007669"/>
    <property type="project" value="Ensembl"/>
</dbReference>
<dbReference type="GO" id="GO:0051216">
    <property type="term" value="P:cartilage development"/>
    <property type="evidence" value="ECO:0007669"/>
    <property type="project" value="Ensembl"/>
</dbReference>
<dbReference type="GO" id="GO:0007155">
    <property type="term" value="P:cell adhesion"/>
    <property type="evidence" value="ECO:0000250"/>
    <property type="project" value="UniProtKB"/>
</dbReference>
<dbReference type="GO" id="GO:1990869">
    <property type="term" value="P:cellular response to chemokine"/>
    <property type="evidence" value="ECO:0000250"/>
    <property type="project" value="UniProtKB"/>
</dbReference>
<dbReference type="GO" id="GO:0061300">
    <property type="term" value="P:cerebellum vasculature development"/>
    <property type="evidence" value="ECO:0007669"/>
    <property type="project" value="Ensembl"/>
</dbReference>
<dbReference type="GO" id="GO:0070098">
    <property type="term" value="P:chemokine-mediated signaling pathway"/>
    <property type="evidence" value="ECO:0000250"/>
    <property type="project" value="UniProtKB"/>
</dbReference>
<dbReference type="GO" id="GO:0061386">
    <property type="term" value="P:closure of optic fissure"/>
    <property type="evidence" value="ECO:0007669"/>
    <property type="project" value="Ensembl"/>
</dbReference>
<dbReference type="GO" id="GO:0061371">
    <property type="term" value="P:determination of heart left/right asymmetry"/>
    <property type="evidence" value="ECO:0007669"/>
    <property type="project" value="Ensembl"/>
</dbReference>
<dbReference type="GO" id="GO:0071910">
    <property type="term" value="P:determination of liver left/right asymmetry"/>
    <property type="evidence" value="ECO:0007669"/>
    <property type="project" value="Ensembl"/>
</dbReference>
<dbReference type="GO" id="GO:0035469">
    <property type="term" value="P:determination of pancreatic left/right asymmetry"/>
    <property type="evidence" value="ECO:0007669"/>
    <property type="project" value="Ensembl"/>
</dbReference>
<dbReference type="GO" id="GO:0006351">
    <property type="term" value="P:DNA-templated transcription"/>
    <property type="evidence" value="ECO:0000250"/>
    <property type="project" value="UniProtKB"/>
</dbReference>
<dbReference type="GO" id="GO:0060059">
    <property type="term" value="P:embryonic retina morphogenesis in camera-type eye"/>
    <property type="evidence" value="ECO:0007669"/>
    <property type="project" value="Ensembl"/>
</dbReference>
<dbReference type="GO" id="GO:0007498">
    <property type="term" value="P:mesoderm development"/>
    <property type="evidence" value="ECO:0000250"/>
    <property type="project" value="UniProtKB"/>
</dbReference>
<dbReference type="GO" id="GO:0008045">
    <property type="term" value="P:motor neuron axon guidance"/>
    <property type="evidence" value="ECO:0007669"/>
    <property type="project" value="Ensembl"/>
</dbReference>
<dbReference type="GO" id="GO:0048387">
    <property type="term" value="P:negative regulation of retinoic acid receptor signaling pathway"/>
    <property type="evidence" value="ECO:0007669"/>
    <property type="project" value="Ensembl"/>
</dbReference>
<dbReference type="GO" id="GO:0001755">
    <property type="term" value="P:neural crest cell migration"/>
    <property type="evidence" value="ECO:0007669"/>
    <property type="project" value="Ensembl"/>
</dbReference>
<dbReference type="GO" id="GO:0033339">
    <property type="term" value="P:pectoral fin development"/>
    <property type="evidence" value="ECO:0007669"/>
    <property type="project" value="Ensembl"/>
</dbReference>
<dbReference type="GO" id="GO:0072149">
    <property type="term" value="P:podocyte cell fate commitment"/>
    <property type="evidence" value="ECO:0007669"/>
    <property type="project" value="Ensembl"/>
</dbReference>
<dbReference type="GO" id="GO:0072015">
    <property type="term" value="P:podocyte development"/>
    <property type="evidence" value="ECO:0007669"/>
    <property type="project" value="Ensembl"/>
</dbReference>
<dbReference type="GO" id="GO:0045944">
    <property type="term" value="P:positive regulation of transcription by RNA polymerase II"/>
    <property type="evidence" value="ECO:0000250"/>
    <property type="project" value="UniProtKB"/>
</dbReference>
<dbReference type="GO" id="GO:0039021">
    <property type="term" value="P:pronephric glomerulus development"/>
    <property type="evidence" value="ECO:0007669"/>
    <property type="project" value="Ensembl"/>
</dbReference>
<dbReference type="GO" id="GO:0048793">
    <property type="term" value="P:pronephros development"/>
    <property type="evidence" value="ECO:0000250"/>
    <property type="project" value="UniProtKB"/>
</dbReference>
<dbReference type="GO" id="GO:0030500">
    <property type="term" value="P:regulation of bone mineralization"/>
    <property type="evidence" value="ECO:0007669"/>
    <property type="project" value="Ensembl"/>
</dbReference>
<dbReference type="GO" id="GO:0006355">
    <property type="term" value="P:regulation of DNA-templated transcription"/>
    <property type="evidence" value="ECO:0000250"/>
    <property type="project" value="UniProtKB"/>
</dbReference>
<dbReference type="GO" id="GO:0040036">
    <property type="term" value="P:regulation of fibroblast growth factor receptor signaling pathway"/>
    <property type="evidence" value="ECO:0007669"/>
    <property type="project" value="Ensembl"/>
</dbReference>
<dbReference type="GO" id="GO:0008593">
    <property type="term" value="P:regulation of Notch signaling pathway"/>
    <property type="evidence" value="ECO:0007669"/>
    <property type="project" value="Ensembl"/>
</dbReference>
<dbReference type="GO" id="GO:2000583">
    <property type="term" value="P:regulation of platelet-derived growth factor receptor-alpha signaling pathway"/>
    <property type="evidence" value="ECO:0007669"/>
    <property type="project" value="Ensembl"/>
</dbReference>
<dbReference type="GO" id="GO:0043114">
    <property type="term" value="P:regulation of vascular permeability"/>
    <property type="evidence" value="ECO:0007669"/>
    <property type="project" value="Ensembl"/>
</dbReference>
<dbReference type="GO" id="GO:0001756">
    <property type="term" value="P:somitogenesis"/>
    <property type="evidence" value="ECO:0007669"/>
    <property type="project" value="Ensembl"/>
</dbReference>
<dbReference type="GO" id="GO:0035886">
    <property type="term" value="P:vascular associated smooth muscle cell differentiation"/>
    <property type="evidence" value="ECO:0007669"/>
    <property type="project" value="Ensembl"/>
</dbReference>
<dbReference type="CDD" id="cd20044">
    <property type="entry name" value="FH_FOXC1"/>
    <property type="match status" value="1"/>
</dbReference>
<dbReference type="FunFam" id="1.10.10.10:FF:000016">
    <property type="entry name" value="Forkhead box protein I1"/>
    <property type="match status" value="1"/>
</dbReference>
<dbReference type="Gene3D" id="1.10.10.10">
    <property type="entry name" value="Winged helix-like DNA-binding domain superfamily/Winged helix DNA-binding domain"/>
    <property type="match status" value="1"/>
</dbReference>
<dbReference type="InterPro" id="IPR001766">
    <property type="entry name" value="Fork_head_dom"/>
</dbReference>
<dbReference type="InterPro" id="IPR050211">
    <property type="entry name" value="FOX_domain-containing"/>
</dbReference>
<dbReference type="InterPro" id="IPR047391">
    <property type="entry name" value="FOXC1/C2-like_FH"/>
</dbReference>
<dbReference type="InterPro" id="IPR018122">
    <property type="entry name" value="TF_fork_head_CS_1"/>
</dbReference>
<dbReference type="InterPro" id="IPR030456">
    <property type="entry name" value="TF_fork_head_CS_2"/>
</dbReference>
<dbReference type="InterPro" id="IPR036388">
    <property type="entry name" value="WH-like_DNA-bd_sf"/>
</dbReference>
<dbReference type="InterPro" id="IPR036390">
    <property type="entry name" value="WH_DNA-bd_sf"/>
</dbReference>
<dbReference type="PANTHER" id="PTHR11829">
    <property type="entry name" value="FORKHEAD BOX PROTEIN"/>
    <property type="match status" value="1"/>
</dbReference>
<dbReference type="PANTHER" id="PTHR11829:SF68">
    <property type="entry name" value="FORKHEAD BOX PROTEIN C1"/>
    <property type="match status" value="1"/>
</dbReference>
<dbReference type="Pfam" id="PF00250">
    <property type="entry name" value="Forkhead"/>
    <property type="match status" value="1"/>
</dbReference>
<dbReference type="PRINTS" id="PR00053">
    <property type="entry name" value="FORKHEAD"/>
</dbReference>
<dbReference type="SMART" id="SM00339">
    <property type="entry name" value="FH"/>
    <property type="match status" value="1"/>
</dbReference>
<dbReference type="SUPFAM" id="SSF46785">
    <property type="entry name" value="Winged helix' DNA-binding domain"/>
    <property type="match status" value="1"/>
</dbReference>
<dbReference type="PROSITE" id="PS00657">
    <property type="entry name" value="FORK_HEAD_1"/>
    <property type="match status" value="1"/>
</dbReference>
<dbReference type="PROSITE" id="PS00658">
    <property type="entry name" value="FORK_HEAD_2"/>
    <property type="match status" value="1"/>
</dbReference>
<dbReference type="PROSITE" id="PS50039">
    <property type="entry name" value="FORK_HEAD_3"/>
    <property type="match status" value="1"/>
</dbReference>
<gene>
    <name type="primary">foxc1</name>
</gene>
<comment type="function">
    <text evidence="1 2 3">DNA-binding transcriptional factor that plays a role in a broad range of cellular and developmental processes such as eye, bones, cardiovascular, kidney and skin development. Acts either as a transcriptional activator or repressor. Binds to the consensus binding site 5'-[G/C][A/T]AAA[T/C]AA[A/C]-3' in promoter of target genes. Upon DNA-binding, promotes DNA bending. Required for cell viability and resistance to oxidative stress in the eye. Promotes cell growth inhibition by stopping the cell cycle in the G1 phase through TGFB1-mediated signals. Involved in epithelial-mesenchymal transition (EMT) induction by increasing cell proliferation, migration and invasion. Involved in chemokine-induced endothelial cell migration. Plays a role in epidermal keratinocyte terminal differentiation. Essential developmental transcriptional factor required for mesoderm-derived tissues formation, such as the somites, skin, bone and cartilage. Plays a role in the development and maintenance of mesenchymal niches for haematopoietic stem and progenitor cells (HSPC). Plays a role in corneal transparency by preventing both blood vessel and lymphatic vessel growth during embryonic development in a VEGF-dependent manner. Plays a role at the gastrula stage for expression of several mesodermal and endodermal genes. At the late neurula stage, regulates expression of adhesion genes to maintain cell adhesion in the mesodermal germ layer.</text>
</comment>
<comment type="subunit">
    <text evidence="6">Monomer.</text>
</comment>
<comment type="subcellular location">
    <subcellularLocation>
        <location evidence="2">Nucleus</location>
    </subcellularLocation>
</comment>
<accession>Q68F77</accession>
<keyword id="KW-0217">Developmental protein</keyword>
<keyword id="KW-0238">DNA-binding</keyword>
<keyword id="KW-0539">Nucleus</keyword>
<keyword id="KW-1185">Reference proteome</keyword>
<keyword id="KW-0804">Transcription</keyword>
<keyword id="KW-0805">Transcription regulation</keyword>
<organism>
    <name type="scientific">Xenopus tropicalis</name>
    <name type="common">Western clawed frog</name>
    <name type="synonym">Silurana tropicalis</name>
    <dbReference type="NCBI Taxonomy" id="8364"/>
    <lineage>
        <taxon>Eukaryota</taxon>
        <taxon>Metazoa</taxon>
        <taxon>Chordata</taxon>
        <taxon>Craniata</taxon>
        <taxon>Vertebrata</taxon>
        <taxon>Euteleostomi</taxon>
        <taxon>Amphibia</taxon>
        <taxon>Batrachia</taxon>
        <taxon>Anura</taxon>
        <taxon>Pipoidea</taxon>
        <taxon>Pipidae</taxon>
        <taxon>Xenopodinae</taxon>
        <taxon>Xenopus</taxon>
        <taxon>Silurana</taxon>
    </lineage>
</organism>